<reference key="1">
    <citation type="journal article" date="2011" name="J. Bacteriol.">
        <title>Complete genome sequence of the metabolically versatile plant growth-promoting endophyte, Variovorax paradoxus S110.</title>
        <authorList>
            <person name="Han J.I."/>
            <person name="Choi H.K."/>
            <person name="Lee S.W."/>
            <person name="Orwin P.M."/>
            <person name="Kim J."/>
            <person name="Laroe S.L."/>
            <person name="Kim T.G."/>
            <person name="O'Neil J."/>
            <person name="Leadbetter J.R."/>
            <person name="Lee S.Y."/>
            <person name="Hur C.G."/>
            <person name="Spain J.C."/>
            <person name="Ovchinnikova G."/>
            <person name="Goodwin L."/>
            <person name="Han C."/>
        </authorList>
    </citation>
    <scope>NUCLEOTIDE SEQUENCE [LARGE SCALE GENOMIC DNA]</scope>
    <source>
        <strain>S110</strain>
    </source>
</reference>
<sequence length="261" mass="29332">MLFLLSPAKSLDYDTPVPTEVPATQPHFEAPRGPSAELIKLLREKSPQQISELMHLSEKLSALNVARYQAWSGKGTPKNARQAAFAFDGDVYGGLDARSLTPTQLAWAQEHVCILSGLYGLLRPLDLLQPYRLEMGTPLANRHGKDLYAFWGARIAEHLNQRLAADRTPVVVNVASQEYFRSVDRKALKARVVECVFEEWKGDRYKIVSFYAKRARGLLARWAVLHKAATPKALEKFDLEGYGFDATASTAERLVFRRKFG</sequence>
<name>Y1301_VARPS</name>
<organism>
    <name type="scientific">Variovorax paradoxus (strain S110)</name>
    <dbReference type="NCBI Taxonomy" id="543728"/>
    <lineage>
        <taxon>Bacteria</taxon>
        <taxon>Pseudomonadati</taxon>
        <taxon>Pseudomonadota</taxon>
        <taxon>Betaproteobacteria</taxon>
        <taxon>Burkholderiales</taxon>
        <taxon>Comamonadaceae</taxon>
        <taxon>Variovorax</taxon>
    </lineage>
</organism>
<evidence type="ECO:0000255" key="1">
    <source>
        <dbReference type="HAMAP-Rule" id="MF_00652"/>
    </source>
</evidence>
<dbReference type="EMBL" id="CP001635">
    <property type="protein sequence ID" value="ACS17952.1"/>
    <property type="molecule type" value="Genomic_DNA"/>
</dbReference>
<dbReference type="SMR" id="C5CRM0"/>
<dbReference type="STRING" id="543728.Vapar_1301"/>
<dbReference type="KEGG" id="vap:Vapar_1301"/>
<dbReference type="eggNOG" id="COG3022">
    <property type="taxonomic scope" value="Bacteria"/>
</dbReference>
<dbReference type="HOGENOM" id="CLU_061989_0_0_4"/>
<dbReference type="OrthoDB" id="9777133at2"/>
<dbReference type="GO" id="GO:0005829">
    <property type="term" value="C:cytosol"/>
    <property type="evidence" value="ECO:0007669"/>
    <property type="project" value="TreeGrafter"/>
</dbReference>
<dbReference type="GO" id="GO:0033194">
    <property type="term" value="P:response to hydroperoxide"/>
    <property type="evidence" value="ECO:0007669"/>
    <property type="project" value="TreeGrafter"/>
</dbReference>
<dbReference type="HAMAP" id="MF_00652">
    <property type="entry name" value="UPF0246"/>
    <property type="match status" value="1"/>
</dbReference>
<dbReference type="InterPro" id="IPR005583">
    <property type="entry name" value="YaaA"/>
</dbReference>
<dbReference type="NCBIfam" id="NF002542">
    <property type="entry name" value="PRK02101.1-3"/>
    <property type="match status" value="1"/>
</dbReference>
<dbReference type="PANTHER" id="PTHR30283:SF4">
    <property type="entry name" value="PEROXIDE STRESS RESISTANCE PROTEIN YAAA"/>
    <property type="match status" value="1"/>
</dbReference>
<dbReference type="PANTHER" id="PTHR30283">
    <property type="entry name" value="PEROXIDE STRESS RESPONSE PROTEIN YAAA"/>
    <property type="match status" value="1"/>
</dbReference>
<dbReference type="Pfam" id="PF03883">
    <property type="entry name" value="H2O2_YaaD"/>
    <property type="match status" value="1"/>
</dbReference>
<accession>C5CRM0</accession>
<feature type="chain" id="PRO_1000212434" description="UPF0246 protein Vapar_1301">
    <location>
        <begin position="1"/>
        <end position="261"/>
    </location>
</feature>
<protein>
    <recommendedName>
        <fullName evidence="1">UPF0246 protein Vapar_1301</fullName>
    </recommendedName>
</protein>
<proteinExistence type="inferred from homology"/>
<gene>
    <name type="ordered locus">Vapar_1301</name>
</gene>
<comment type="similarity">
    <text evidence="1">Belongs to the UPF0246 family.</text>
</comment>